<evidence type="ECO:0000250" key="1"/>
<evidence type="ECO:0000305" key="2"/>
<name>MCP_IRV9</name>
<gene>
    <name type="primary">MCP</name>
</gene>
<reference key="1">
    <citation type="journal article" date="1999" name="Virus Res.">
        <title>Comparison of the major capsid protein genes, terminal redundancies, and DNA-DNA homologies of two New Zealand iridoviruses.</title>
        <authorList>
            <person name="Webby R.J."/>
            <person name="Kalmakoff J."/>
        </authorList>
    </citation>
    <scope>NUCLEOTIDE SEQUENCE [GENOMIC DNA]</scope>
</reference>
<proteinExistence type="inferred from homology"/>
<dbReference type="EMBL" id="AF025774">
    <property type="protein sequence ID" value="AAB82568.1"/>
    <property type="molecule type" value="Genomic_DNA"/>
</dbReference>
<dbReference type="RefSeq" id="YP_004732793.1">
    <property type="nucleotide sequence ID" value="NC_015780.1"/>
</dbReference>
<dbReference type="SMR" id="O39163"/>
<dbReference type="KEGG" id="vg:10963732"/>
<dbReference type="GO" id="GO:0019028">
    <property type="term" value="C:viral capsid"/>
    <property type="evidence" value="ECO:0007669"/>
    <property type="project" value="UniProtKB-KW"/>
</dbReference>
<dbReference type="GO" id="GO:0005198">
    <property type="term" value="F:structural molecule activity"/>
    <property type="evidence" value="ECO:0007669"/>
    <property type="project" value="InterPro"/>
</dbReference>
<dbReference type="Gene3D" id="2.70.9.10">
    <property type="entry name" value="Adenovirus Type 2 Hexon, domain 4"/>
    <property type="match status" value="1"/>
</dbReference>
<dbReference type="Gene3D" id="2.70.9.20">
    <property type="entry name" value="Major capsid protein Vp54"/>
    <property type="match status" value="1"/>
</dbReference>
<dbReference type="InterPro" id="IPR031654">
    <property type="entry name" value="Capsid_N"/>
</dbReference>
<dbReference type="InterPro" id="IPR007542">
    <property type="entry name" value="MCP_C"/>
</dbReference>
<dbReference type="InterPro" id="IPR038519">
    <property type="entry name" value="MCP_C_sf"/>
</dbReference>
<dbReference type="InterPro" id="IPR016112">
    <property type="entry name" value="VP_dsDNA_II"/>
</dbReference>
<dbReference type="Pfam" id="PF16903">
    <property type="entry name" value="Capsid_N"/>
    <property type="match status" value="1"/>
</dbReference>
<dbReference type="Pfam" id="PF04451">
    <property type="entry name" value="Capsid_NCLDV"/>
    <property type="match status" value="1"/>
</dbReference>
<dbReference type="SUPFAM" id="SSF49749">
    <property type="entry name" value="Group II dsDNA viruses VP"/>
    <property type="match status" value="2"/>
</dbReference>
<keyword id="KW-0167">Capsid protein</keyword>
<keyword id="KW-0426">Late protein</keyword>
<keyword id="KW-0946">Virion</keyword>
<organism>
    <name type="scientific">Wiseana iridescent virus</name>
    <name type="common">WIV</name>
    <name type="synonym">Insect iridescent virus type 9</name>
    <dbReference type="NCBI Taxonomy" id="68347"/>
    <lineage>
        <taxon>Viruses</taxon>
        <taxon>Varidnaviria</taxon>
        <taxon>Bamfordvirae</taxon>
        <taxon>Nucleocytoviricota</taxon>
        <taxon>Megaviricetes</taxon>
        <taxon>Pimascovirales</taxon>
        <taxon>Iridoviridae</taxon>
        <taxon>Betairidovirinae</taxon>
        <taxon>Chloriridovirus</taxon>
        <taxon>Invertebrate iridescent virus 9</taxon>
    </lineage>
</organism>
<comment type="function">
    <text evidence="1">Major capsid protein that self assembles to form an icosahedral capsid. Represents around 50% of the total virion protein mass (By similarity).</text>
</comment>
<comment type="subunit">
    <text evidence="1">Homotrimer.</text>
</comment>
<comment type="subcellular location">
    <subcellularLocation>
        <location evidence="2">Virion</location>
    </subcellularLocation>
</comment>
<comment type="similarity">
    <text evidence="2">Belongs to the NCLDV major capsid protein family.</text>
</comment>
<accession>O39163</accession>
<sequence>MSMSSSNITSGFIDIATFDEIEKYMYGGPTATAYFVREIRKSTWFTQVPVPLSRNTGNAAFGQEWSVSISRAGDYLLQTWLRVNIPQVTLNPLLAATFSLRWTRNLMHNLIREATITFNDLVAARFDNYHLDFWSAFTVPASKRTGYDNMIGNVSSLINPVAPGGNLGSTGGTNLNLPLPFFFSRDTGVALPTAALPYNEMQINFNFRDWTELLVLQNSALVAPASPYVPIVVPTHLTVAPVLGPVQVWANYAIVSNEERRRMGCAIRDILIEQVQTAPRQNYTPLTNASPTFDIRFSHAIKALFFSVRNKTSASEWSNYATSSPVVTGATVNFEPTGSFDPIANTTLIYENTNRLGAMGSDYFSLINPFYHAPTIPSFIGYHLYSYSLHFYDLDPMGSTNYGKLTNVSVVPQASPAAVNAASGAGGFPGSDYPQSYEFVIVAVNNNIVRISGGETPQNYLSGSFVTLLNRRKWSREGPMIMVQ</sequence>
<feature type="chain" id="PRO_0000222382" description="Major capsid protein">
    <location>
        <begin position="1"/>
        <end position="484"/>
    </location>
</feature>
<protein>
    <recommendedName>
        <fullName>Major capsid protein</fullName>
        <shortName>MCP</shortName>
    </recommendedName>
    <alternativeName>
        <fullName>P50</fullName>
    </alternativeName>
</protein>
<organismHost>
    <name type="scientific">Wiseana cervinata</name>
    <dbReference type="NCBI Taxonomy" id="107013"/>
</organismHost>